<organism>
    <name type="scientific">Sus scrofa</name>
    <name type="common">Pig</name>
    <dbReference type="NCBI Taxonomy" id="9823"/>
    <lineage>
        <taxon>Eukaryota</taxon>
        <taxon>Metazoa</taxon>
        <taxon>Chordata</taxon>
        <taxon>Craniata</taxon>
        <taxon>Vertebrata</taxon>
        <taxon>Euteleostomi</taxon>
        <taxon>Mammalia</taxon>
        <taxon>Eutheria</taxon>
        <taxon>Laurasiatheria</taxon>
        <taxon>Artiodactyla</taxon>
        <taxon>Suina</taxon>
        <taxon>Suidae</taxon>
        <taxon>Sus</taxon>
    </lineage>
</organism>
<protein>
    <recommendedName>
        <fullName>Prostaglandin-H2 D-isomerase</fullName>
        <ecNumber evidence="4">5.3.99.2</ecNumber>
    </recommendedName>
    <alternativeName>
        <fullName>Glutathione-independent PGD synthase</fullName>
    </alternativeName>
    <alternativeName>
        <fullName>Lipocalin-type prostaglandin-D synthase</fullName>
    </alternativeName>
    <alternativeName>
        <fullName>Prostaglandin-D2 synthase</fullName>
        <shortName>PGD2 synthase</shortName>
        <shortName>PGDS</shortName>
        <shortName>PGDS2</shortName>
    </alternativeName>
</protein>
<gene>
    <name type="primary">PTGDS</name>
</gene>
<accession>Q29095</accession>
<proteinExistence type="evidence at protein level"/>
<reference key="1">
    <citation type="journal article" date="1996" name="J. Cell. Physiol.">
        <title>Constitutive secretion of beta-trace protein by cultivated porcine choroid plexus epithelial cells: elucidation of its complete amino acid and cDNA sequences.</title>
        <authorList>
            <person name="Hoffmann A."/>
            <person name="Gath U."/>
            <person name="Gross G."/>
            <person name="Lauber J."/>
            <person name="Getclaff R."/>
            <person name="Hillwig S."/>
            <person name="Galla H.J."/>
            <person name="Conradt H.S."/>
        </authorList>
    </citation>
    <scope>NUCLEOTIDE SEQUENCE [MRNA]</scope>
    <scope>PROTEIN SEQUENCE OF 27-58; 61-94; 96-123; 125-147; 150-158; 161-166; 169-180 AND 184-189</scope>
    <scope>TISSUE SPECIFICITY</scope>
</reference>
<reference key="2">
    <citation type="journal article" date="1996" name="Neurosci. Lett.">
        <title>Choroid plexus: the major site of mRNA expression for the beta-trace protein (prostaglandin D synthase) in human brain.</title>
        <authorList>
            <person name="Bloedorn B."/>
            <person name="Maeder M."/>
            <person name="Urade Y."/>
            <person name="Hayaishi O."/>
            <person name="Felgenhauer K."/>
            <person name="Brueck W."/>
        </authorList>
    </citation>
    <scope>TISSUE SPECIFICITY</scope>
</reference>
<comment type="function">
    <text evidence="1 2 4">Catalyzes the conversion of PGH2 to PGD2, a prostaglandin involved in smooth muscle contraction/relaxation and a potent inhibitor of platelet aggregation. Involved in a variety of CNS functions, such as sedation, NREM sleep and PGE2-induced allodynia, and may have an anti-apoptotic role in oligodendrocytes. Binds small non-substrate lipophilic molecules, including biliverdin, bilirubin, retinal, retinoic acid and thyroid hormone, and may act as a scavenger for harmful hydrophobic molecules and as a secretory retinoid and thyroid hormone transporter. Possibly involved in development and maintenance of the blood-brain, blood-retina, blood-aqueous humor and blood-testis barrier. It is likely to play important roles in both maturation and maintenance of the central nervous system and male reproductive system (By similarity). Involved in PLA2G3-dependent maturation of mast cells. PLA2G3 is secreted by immature mast cells and acts on nearby fibroblasts upstream to PTDGS to synthesize PGD2, which in turn promotes mast cell maturation and degranulation via PTGDR (By similarity).</text>
</comment>
<comment type="catalytic activity">
    <reaction evidence="4">
        <text>prostaglandin H2 = prostaglandin D2</text>
        <dbReference type="Rhea" id="RHEA:10600"/>
        <dbReference type="ChEBI" id="CHEBI:57405"/>
        <dbReference type="ChEBI" id="CHEBI:57406"/>
        <dbReference type="EC" id="5.3.99.2"/>
    </reaction>
</comment>
<comment type="subunit">
    <text evidence="4">Monomer.</text>
</comment>
<comment type="subcellular location">
    <subcellularLocation>
        <location evidence="4">Rough endoplasmic reticulum</location>
    </subcellularLocation>
    <subcellularLocation>
        <location evidence="4">Nucleus membrane</location>
    </subcellularLocation>
    <subcellularLocation>
        <location evidence="4">Golgi apparatus</location>
    </subcellularLocation>
    <subcellularLocation>
        <location evidence="4">Cytoplasm</location>
        <location evidence="4">Perinuclear region</location>
    </subcellularLocation>
    <subcellularLocation>
        <location evidence="4">Secreted</location>
    </subcellularLocation>
    <text evidence="4">Detected on rough endoplasmic reticulum of arachnoid and menigioma cells. Localized to the nuclear envelope, Golgi apparatus, secretory vesicles and spherical cytoplasmic structures in arachnoid trabecular cells, and to circular cytoplasmic structures in meningeal macrophages and perivascular microglial cells. In oligodendrocytes, localized to the rough endoplasmic reticulum and nuclear envelope. In retinal pigment epithelial cells, localized to distinct cytoplasmic domains including the perinuclear region. Also secreted.</text>
</comment>
<comment type="tissue specificity">
    <text evidence="5 6">Abundant in the brain and CNS, where it is expressed in tissues of the blood-brain barrier and secreted into the cerebro-spinal fluid.</text>
</comment>
<comment type="domain">
    <text evidence="4">Forms a beta-barrel structure that accommodates hydrophobic ligands in its interior.</text>
</comment>
<comment type="similarity">
    <text evidence="7">Belongs to the calycin superfamily. Lipocalin family.</text>
</comment>
<evidence type="ECO:0000250" key="1"/>
<evidence type="ECO:0000250" key="2">
    <source>
        <dbReference type="UniProtKB" id="O09114"/>
    </source>
</evidence>
<evidence type="ECO:0000250" key="3">
    <source>
        <dbReference type="UniProtKB" id="P22057"/>
    </source>
</evidence>
<evidence type="ECO:0000250" key="4">
    <source>
        <dbReference type="UniProtKB" id="P41222"/>
    </source>
</evidence>
<evidence type="ECO:0000269" key="5">
    <source>
    </source>
</evidence>
<evidence type="ECO:0000269" key="6">
    <source>
    </source>
</evidence>
<evidence type="ECO:0000305" key="7"/>
<keyword id="KW-0963">Cytoplasm</keyword>
<keyword id="KW-0903">Direct protein sequencing</keyword>
<keyword id="KW-1015">Disulfide bond</keyword>
<keyword id="KW-0256">Endoplasmic reticulum</keyword>
<keyword id="KW-0275">Fatty acid biosynthesis</keyword>
<keyword id="KW-0276">Fatty acid metabolism</keyword>
<keyword id="KW-0325">Glycoprotein</keyword>
<keyword id="KW-0333">Golgi apparatus</keyword>
<keyword id="KW-0413">Isomerase</keyword>
<keyword id="KW-0444">Lipid biosynthesis</keyword>
<keyword id="KW-0443">Lipid metabolism</keyword>
<keyword id="KW-0467">Mast cell degranulation</keyword>
<keyword id="KW-0472">Membrane</keyword>
<keyword id="KW-0539">Nucleus</keyword>
<keyword id="KW-0643">Prostaglandin biosynthesis</keyword>
<keyword id="KW-0644">Prostaglandin metabolism</keyword>
<keyword id="KW-0873">Pyrrolidone carboxylic acid</keyword>
<keyword id="KW-1185">Reference proteome</keyword>
<keyword id="KW-0964">Secreted</keyword>
<keyword id="KW-0732">Signal</keyword>
<keyword id="KW-0813">Transport</keyword>
<sequence>MATPSSLWLGLALLGTLGVLQTPAQASLQPNFQEDKFLGRWFTSGLASNSSWFLEKKKVLSMCKSLVAPAPDGGFNLTSTFLRKDQCVTRTLMLRPAGPPGCYSYTSPHGGSNLEVSVVETDYKNYALLHTESGPSPGPAFRMATLYSRSQAPGAAVREKFTAFAKARGFTEDGIVFLPRNEKCLEEHE</sequence>
<dbReference type="EC" id="5.3.99.2" evidence="4"/>
<dbReference type="EMBL" id="X92979">
    <property type="protein sequence ID" value="CAA63556.1"/>
    <property type="molecule type" value="mRNA"/>
</dbReference>
<dbReference type="RefSeq" id="NP_999393.1">
    <property type="nucleotide sequence ID" value="NM_214228.1"/>
</dbReference>
<dbReference type="SMR" id="Q29095"/>
<dbReference type="FunCoup" id="Q29095">
    <property type="interactions" value="679"/>
</dbReference>
<dbReference type="STRING" id="9823.ENSSSCP00000065625"/>
<dbReference type="BindingDB" id="Q29095"/>
<dbReference type="GlyCosmos" id="Q29095">
    <property type="glycosylation" value="2 sites, No reported glycans"/>
</dbReference>
<dbReference type="GlyGen" id="Q29095">
    <property type="glycosylation" value="3 sites"/>
</dbReference>
<dbReference type="PeptideAtlas" id="Q29095"/>
<dbReference type="Ensembl" id="ENSSSCT00115032147">
    <property type="protein sequence ID" value="ENSSSCP00115030567"/>
    <property type="gene ID" value="ENSSSCG00115018156"/>
</dbReference>
<dbReference type="GeneID" id="397456"/>
<dbReference type="KEGG" id="ssc:397456"/>
<dbReference type="CTD" id="5730"/>
<dbReference type="InParanoid" id="Q29095"/>
<dbReference type="OrthoDB" id="9048943at2759"/>
<dbReference type="Proteomes" id="UP000008227">
    <property type="component" value="Unplaced"/>
</dbReference>
<dbReference type="Proteomes" id="UP000314985">
    <property type="component" value="Unplaced"/>
</dbReference>
<dbReference type="Proteomes" id="UP000694570">
    <property type="component" value="Unplaced"/>
</dbReference>
<dbReference type="Proteomes" id="UP000694571">
    <property type="component" value="Unplaced"/>
</dbReference>
<dbReference type="Proteomes" id="UP000694720">
    <property type="component" value="Unplaced"/>
</dbReference>
<dbReference type="Proteomes" id="UP000694722">
    <property type="component" value="Unplaced"/>
</dbReference>
<dbReference type="Proteomes" id="UP000694723">
    <property type="component" value="Unplaced"/>
</dbReference>
<dbReference type="Proteomes" id="UP000694724">
    <property type="component" value="Unplaced"/>
</dbReference>
<dbReference type="Proteomes" id="UP000694725">
    <property type="component" value="Unplaced"/>
</dbReference>
<dbReference type="Proteomes" id="UP000694726">
    <property type="component" value="Unplaced"/>
</dbReference>
<dbReference type="Proteomes" id="UP000694727">
    <property type="component" value="Unplaced"/>
</dbReference>
<dbReference type="Proteomes" id="UP000694728">
    <property type="component" value="Unplaced"/>
</dbReference>
<dbReference type="GO" id="GO:0005576">
    <property type="term" value="C:extracellular region"/>
    <property type="evidence" value="ECO:0000250"/>
    <property type="project" value="UniProtKB"/>
</dbReference>
<dbReference type="GO" id="GO:0005615">
    <property type="term" value="C:extracellular space"/>
    <property type="evidence" value="ECO:0000318"/>
    <property type="project" value="GO_Central"/>
</dbReference>
<dbReference type="GO" id="GO:0005794">
    <property type="term" value="C:Golgi apparatus"/>
    <property type="evidence" value="ECO:0000250"/>
    <property type="project" value="UniProtKB"/>
</dbReference>
<dbReference type="GO" id="GO:0031965">
    <property type="term" value="C:nuclear membrane"/>
    <property type="evidence" value="ECO:0007669"/>
    <property type="project" value="UniProtKB-SubCell"/>
</dbReference>
<dbReference type="GO" id="GO:0048471">
    <property type="term" value="C:perinuclear region of cytoplasm"/>
    <property type="evidence" value="ECO:0007669"/>
    <property type="project" value="UniProtKB-SubCell"/>
</dbReference>
<dbReference type="GO" id="GO:0005791">
    <property type="term" value="C:rough endoplasmic reticulum"/>
    <property type="evidence" value="ECO:0000250"/>
    <property type="project" value="UniProtKB"/>
</dbReference>
<dbReference type="GO" id="GO:0004667">
    <property type="term" value="F:prostaglandin-D synthase activity"/>
    <property type="evidence" value="ECO:0000250"/>
    <property type="project" value="UniProtKB"/>
</dbReference>
<dbReference type="GO" id="GO:0005501">
    <property type="term" value="F:retinoid binding"/>
    <property type="evidence" value="ECO:0000250"/>
    <property type="project" value="UniProtKB"/>
</dbReference>
<dbReference type="GO" id="GO:0036094">
    <property type="term" value="F:small molecule binding"/>
    <property type="evidence" value="ECO:0007669"/>
    <property type="project" value="InterPro"/>
</dbReference>
<dbReference type="GO" id="GO:0043303">
    <property type="term" value="P:mast cell degranulation"/>
    <property type="evidence" value="ECO:0007669"/>
    <property type="project" value="UniProtKB-KW"/>
</dbReference>
<dbReference type="GO" id="GO:0001516">
    <property type="term" value="P:prostaglandin biosynthetic process"/>
    <property type="evidence" value="ECO:0000250"/>
    <property type="project" value="UniProtKB"/>
</dbReference>
<dbReference type="GO" id="GO:0045187">
    <property type="term" value="P:regulation of circadian sleep/wake cycle, sleep"/>
    <property type="evidence" value="ECO:0000250"/>
    <property type="project" value="UniProtKB"/>
</dbReference>
<dbReference type="Gene3D" id="2.40.128.20">
    <property type="match status" value="1"/>
</dbReference>
<dbReference type="InterPro" id="IPR012674">
    <property type="entry name" value="Calycin"/>
</dbReference>
<dbReference type="InterPro" id="IPR002345">
    <property type="entry name" value="Lipocalin"/>
</dbReference>
<dbReference type="InterPro" id="IPR000566">
    <property type="entry name" value="Lipocln_cytosolic_FA-bd_dom"/>
</dbReference>
<dbReference type="PANTHER" id="PTHR11430">
    <property type="entry name" value="LIPOCALIN"/>
    <property type="match status" value="1"/>
</dbReference>
<dbReference type="PANTHER" id="PTHR11430:SF86">
    <property type="entry name" value="PROSTAGLANDIN-H2 D-ISOMERASE"/>
    <property type="match status" value="1"/>
</dbReference>
<dbReference type="Pfam" id="PF00061">
    <property type="entry name" value="Lipocalin"/>
    <property type="match status" value="1"/>
</dbReference>
<dbReference type="PRINTS" id="PR00179">
    <property type="entry name" value="LIPOCALIN"/>
</dbReference>
<dbReference type="PRINTS" id="PR01254">
    <property type="entry name" value="PGNDSYNTHASE"/>
</dbReference>
<dbReference type="SUPFAM" id="SSF50814">
    <property type="entry name" value="Lipocalins"/>
    <property type="match status" value="1"/>
</dbReference>
<feature type="signal peptide" evidence="4">
    <location>
        <begin position="1"/>
        <end position="24"/>
    </location>
</feature>
<feature type="chain" id="PRO_0000017948" description="Prostaglandin-H2 D-isomerase">
    <location>
        <begin position="25"/>
        <end position="189"/>
    </location>
</feature>
<feature type="active site" description="Nucleophile" evidence="4">
    <location>
        <position position="63"/>
    </location>
</feature>
<feature type="modified residue" description="Pyrrolidone carboxylic acid" evidence="3">
    <location>
        <position position="25"/>
    </location>
</feature>
<feature type="glycosylation site" description="N-linked (GlcNAc...) asparagine" evidence="1">
    <location>
        <position position="49"/>
    </location>
</feature>
<feature type="glycosylation site" description="N-linked (GlcNAc...) asparagine" evidence="1">
    <location>
        <position position="76"/>
    </location>
</feature>
<feature type="disulfide bond" evidence="2">
    <location>
        <begin position="87"/>
        <end position="184"/>
    </location>
</feature>
<name>PTGDS_PIG</name>